<dbReference type="EC" id="7.3.2.1" evidence="1"/>
<dbReference type="EMBL" id="AP006627">
    <property type="protein sequence ID" value="BAD65123.1"/>
    <property type="molecule type" value="Genomic_DNA"/>
</dbReference>
<dbReference type="SMR" id="Q5WET7"/>
<dbReference type="STRING" id="66692.ABC2588"/>
<dbReference type="KEGG" id="bcl:ABC2588"/>
<dbReference type="eggNOG" id="COG1117">
    <property type="taxonomic scope" value="Bacteria"/>
</dbReference>
<dbReference type="HOGENOM" id="CLU_000604_1_22_9"/>
<dbReference type="OrthoDB" id="9802185at2"/>
<dbReference type="Proteomes" id="UP000001168">
    <property type="component" value="Chromosome"/>
</dbReference>
<dbReference type="GO" id="GO:0005886">
    <property type="term" value="C:plasma membrane"/>
    <property type="evidence" value="ECO:0007669"/>
    <property type="project" value="UniProtKB-SubCell"/>
</dbReference>
<dbReference type="GO" id="GO:0005524">
    <property type="term" value="F:ATP binding"/>
    <property type="evidence" value="ECO:0007669"/>
    <property type="project" value="UniProtKB-KW"/>
</dbReference>
<dbReference type="GO" id="GO:0016887">
    <property type="term" value="F:ATP hydrolysis activity"/>
    <property type="evidence" value="ECO:0007669"/>
    <property type="project" value="InterPro"/>
</dbReference>
<dbReference type="GO" id="GO:0015415">
    <property type="term" value="F:ATPase-coupled phosphate ion transmembrane transporter activity"/>
    <property type="evidence" value="ECO:0007669"/>
    <property type="project" value="UniProtKB-EC"/>
</dbReference>
<dbReference type="GO" id="GO:0035435">
    <property type="term" value="P:phosphate ion transmembrane transport"/>
    <property type="evidence" value="ECO:0007669"/>
    <property type="project" value="InterPro"/>
</dbReference>
<dbReference type="CDD" id="cd03260">
    <property type="entry name" value="ABC_PstB_phosphate_transporter"/>
    <property type="match status" value="1"/>
</dbReference>
<dbReference type="Gene3D" id="3.40.50.300">
    <property type="entry name" value="P-loop containing nucleotide triphosphate hydrolases"/>
    <property type="match status" value="1"/>
</dbReference>
<dbReference type="InterPro" id="IPR003593">
    <property type="entry name" value="AAA+_ATPase"/>
</dbReference>
<dbReference type="InterPro" id="IPR003439">
    <property type="entry name" value="ABC_transporter-like_ATP-bd"/>
</dbReference>
<dbReference type="InterPro" id="IPR017871">
    <property type="entry name" value="ABC_transporter-like_CS"/>
</dbReference>
<dbReference type="InterPro" id="IPR027417">
    <property type="entry name" value="P-loop_NTPase"/>
</dbReference>
<dbReference type="InterPro" id="IPR005670">
    <property type="entry name" value="PstB-like"/>
</dbReference>
<dbReference type="NCBIfam" id="TIGR00972">
    <property type="entry name" value="3a0107s01c2"/>
    <property type="match status" value="1"/>
</dbReference>
<dbReference type="PANTHER" id="PTHR43423">
    <property type="entry name" value="ABC TRANSPORTER I FAMILY MEMBER 17"/>
    <property type="match status" value="1"/>
</dbReference>
<dbReference type="PANTHER" id="PTHR43423:SF1">
    <property type="entry name" value="ABC TRANSPORTER I FAMILY MEMBER 17"/>
    <property type="match status" value="1"/>
</dbReference>
<dbReference type="Pfam" id="PF00005">
    <property type="entry name" value="ABC_tran"/>
    <property type="match status" value="1"/>
</dbReference>
<dbReference type="SMART" id="SM00382">
    <property type="entry name" value="AAA"/>
    <property type="match status" value="1"/>
</dbReference>
<dbReference type="SUPFAM" id="SSF52540">
    <property type="entry name" value="P-loop containing nucleoside triphosphate hydrolases"/>
    <property type="match status" value="1"/>
</dbReference>
<dbReference type="PROSITE" id="PS00211">
    <property type="entry name" value="ABC_TRANSPORTER_1"/>
    <property type="match status" value="1"/>
</dbReference>
<dbReference type="PROSITE" id="PS50893">
    <property type="entry name" value="ABC_TRANSPORTER_2"/>
    <property type="match status" value="1"/>
</dbReference>
<dbReference type="PROSITE" id="PS51238">
    <property type="entry name" value="PSTB"/>
    <property type="match status" value="1"/>
</dbReference>
<comment type="function">
    <text evidence="1">Part of the ABC transporter complex PstSACB involved in phosphate import. Responsible for energy coupling to the transport system.</text>
</comment>
<comment type="catalytic activity">
    <reaction evidence="1">
        <text>phosphate(out) + ATP + H2O = ADP + 2 phosphate(in) + H(+)</text>
        <dbReference type="Rhea" id="RHEA:24440"/>
        <dbReference type="ChEBI" id="CHEBI:15377"/>
        <dbReference type="ChEBI" id="CHEBI:15378"/>
        <dbReference type="ChEBI" id="CHEBI:30616"/>
        <dbReference type="ChEBI" id="CHEBI:43474"/>
        <dbReference type="ChEBI" id="CHEBI:456216"/>
        <dbReference type="EC" id="7.3.2.1"/>
    </reaction>
</comment>
<comment type="subunit">
    <text evidence="1">The complex is composed of two ATP-binding proteins (PstB), two transmembrane proteins (PstC and PstA) and a solute-binding protein (PstS).</text>
</comment>
<comment type="subcellular location">
    <subcellularLocation>
        <location evidence="1">Cell membrane</location>
        <topology evidence="1">Peripheral membrane protein</topology>
    </subcellularLocation>
</comment>
<comment type="similarity">
    <text evidence="1">Belongs to the ABC transporter superfamily. Phosphate importer (TC 3.A.1.7) family.</text>
</comment>
<evidence type="ECO:0000255" key="1">
    <source>
        <dbReference type="HAMAP-Rule" id="MF_01702"/>
    </source>
</evidence>
<accession>Q5WET7</accession>
<reference key="1">
    <citation type="submission" date="2003-10" db="EMBL/GenBank/DDBJ databases">
        <title>The complete genome sequence of the alkaliphilic Bacillus clausii KSM-K16.</title>
        <authorList>
            <person name="Takaki Y."/>
            <person name="Kageyama Y."/>
            <person name="Shimamura S."/>
            <person name="Suzuki H."/>
            <person name="Nishi S."/>
            <person name="Hatada Y."/>
            <person name="Kawai S."/>
            <person name="Ito S."/>
            <person name="Horikoshi K."/>
        </authorList>
    </citation>
    <scope>NUCLEOTIDE SEQUENCE [LARGE SCALE GENOMIC DNA]</scope>
    <source>
        <strain>KSM-K16</strain>
    </source>
</reference>
<sequence length="270" mass="30208">MTALTVPKKDTTALKQPSKQAEAILQAKDINIYYGENHAVKQLSLDINKNEILALIGPSGCGKSTFLRSINRMNDLIPSARVTGTLAYEGLNLLSDDVNVVALRKEIGMVFQKANPFPKSIYENLVHGLRFHNVKKKEWADIVEDSLKRAALWDEVKDRLHESALSLSGGQQQRLCIARTLALKPEVILLDEPASALDPIATAKVEELMVELKKNYTVVVVTHNMQQASRVSDRTAFFYNGELIEVNKTDVLFRNPEKKQTEDYISGRFG</sequence>
<gene>
    <name evidence="1" type="primary">pstB2</name>
    <name type="synonym">pstBA</name>
    <name type="ordered locus">ABC2588</name>
</gene>
<proteinExistence type="inferred from homology"/>
<organism>
    <name type="scientific">Shouchella clausii (strain KSM-K16)</name>
    <name type="common">Alkalihalobacillus clausii</name>
    <dbReference type="NCBI Taxonomy" id="66692"/>
    <lineage>
        <taxon>Bacteria</taxon>
        <taxon>Bacillati</taxon>
        <taxon>Bacillota</taxon>
        <taxon>Bacilli</taxon>
        <taxon>Bacillales</taxon>
        <taxon>Bacillaceae</taxon>
        <taxon>Shouchella</taxon>
    </lineage>
</organism>
<name>PSTB2_SHOC1</name>
<keyword id="KW-0067">ATP-binding</keyword>
<keyword id="KW-1003">Cell membrane</keyword>
<keyword id="KW-0472">Membrane</keyword>
<keyword id="KW-0547">Nucleotide-binding</keyword>
<keyword id="KW-0592">Phosphate transport</keyword>
<keyword id="KW-1185">Reference proteome</keyword>
<keyword id="KW-1278">Translocase</keyword>
<keyword id="KW-0813">Transport</keyword>
<feature type="chain" id="PRO_0000272424" description="Phosphate import ATP-binding protein PstB 2">
    <location>
        <begin position="1"/>
        <end position="270"/>
    </location>
</feature>
<feature type="domain" description="ABC transporter" evidence="1">
    <location>
        <begin position="25"/>
        <end position="265"/>
    </location>
</feature>
<feature type="binding site" evidence="1">
    <location>
        <begin position="57"/>
        <end position="64"/>
    </location>
    <ligand>
        <name>ATP</name>
        <dbReference type="ChEBI" id="CHEBI:30616"/>
    </ligand>
</feature>
<protein>
    <recommendedName>
        <fullName evidence="1">Phosphate import ATP-binding protein PstB 2</fullName>
        <ecNumber evidence="1">7.3.2.1</ecNumber>
    </recommendedName>
    <alternativeName>
        <fullName evidence="1">ABC phosphate transporter 2</fullName>
    </alternativeName>
    <alternativeName>
        <fullName evidence="1">Phosphate-transporting ATPase 2</fullName>
    </alternativeName>
</protein>